<keyword id="KW-0143">Chaperone</keyword>
<keyword id="KW-0963">Cytoplasm</keyword>
<keyword id="KW-0996">Nickel insertion</keyword>
<keyword id="KW-1185">Reference proteome</keyword>
<sequence length="296" mass="33004">MQRLDPWHGTCNLQFVAGSSGSQFQGGCTAPLKLMRAERGENGRCELPLLHTAGGLVGGDQLSINLGLRPNSRCLLTSVAAQKIYGSIGRSQLHPLGTWARQQVSAELDADSDLEWLPQELVLYADALFEQNLSVTLPMDGSFLSAEIVRLGRTAANETLGQGCWRSDVQIQRQTSEGRRWELVDRLEISDDALKGFHGLNQQPVFGTLVWAAPFPLQTTKINNLLDDIRQDRKALEGQMHCGALPQGLIARYSGFSSRDARFWFSRIWARTRQARNLASPKIPRVWPLQEYPLRP</sequence>
<evidence type="ECO:0000255" key="1">
    <source>
        <dbReference type="HAMAP-Rule" id="MF_01384"/>
    </source>
</evidence>
<proteinExistence type="inferred from homology"/>
<comment type="function">
    <text evidence="1">Required for maturation of urease via the functional incorporation of the urease nickel metallocenter.</text>
</comment>
<comment type="subunit">
    <text evidence="1">UreD, UreF and UreG form a complex that acts as a GTP-hydrolysis-dependent molecular chaperone, activating the urease apoprotein by helping to assemble the nickel containing metallocenter of UreC. The UreE protein probably delivers the nickel.</text>
</comment>
<comment type="subcellular location">
    <subcellularLocation>
        <location evidence="1">Cytoplasm</location>
    </subcellularLocation>
</comment>
<comment type="similarity">
    <text evidence="1">Belongs to the UreD family.</text>
</comment>
<reference key="1">
    <citation type="journal article" date="2006" name="Proc. Natl. Acad. Sci. U.S.A.">
        <title>Genome sequence of Synechococcus CC9311: insights into adaptation to a coastal environment.</title>
        <authorList>
            <person name="Palenik B."/>
            <person name="Ren Q."/>
            <person name="Dupont C.L."/>
            <person name="Myers G.S."/>
            <person name="Heidelberg J.F."/>
            <person name="Badger J.H."/>
            <person name="Madupu R."/>
            <person name="Nelson W.C."/>
            <person name="Brinkac L.M."/>
            <person name="Dodson R.J."/>
            <person name="Durkin A.S."/>
            <person name="Daugherty S.C."/>
            <person name="Sullivan S.A."/>
            <person name="Khouri H."/>
            <person name="Mohamoud Y."/>
            <person name="Halpin R."/>
            <person name="Paulsen I.T."/>
        </authorList>
    </citation>
    <scope>NUCLEOTIDE SEQUENCE [LARGE SCALE GENOMIC DNA]</scope>
    <source>
        <strain>CC9311</strain>
    </source>
</reference>
<name>URED_SYNS3</name>
<organism>
    <name type="scientific">Synechococcus sp. (strain CC9311)</name>
    <dbReference type="NCBI Taxonomy" id="64471"/>
    <lineage>
        <taxon>Bacteria</taxon>
        <taxon>Bacillati</taxon>
        <taxon>Cyanobacteriota</taxon>
        <taxon>Cyanophyceae</taxon>
        <taxon>Synechococcales</taxon>
        <taxon>Synechococcaceae</taxon>
        <taxon>Synechococcus</taxon>
    </lineage>
</organism>
<gene>
    <name evidence="1" type="primary">ureD</name>
    <name type="ordered locus">sync_2876</name>
</gene>
<dbReference type="EMBL" id="CP000435">
    <property type="protein sequence ID" value="ABI46405.1"/>
    <property type="molecule type" value="Genomic_DNA"/>
</dbReference>
<dbReference type="RefSeq" id="WP_011620763.1">
    <property type="nucleotide sequence ID" value="NC_008319.1"/>
</dbReference>
<dbReference type="SMR" id="Q0I659"/>
<dbReference type="STRING" id="64471.sync_2876"/>
<dbReference type="KEGG" id="syg:sync_2876"/>
<dbReference type="eggNOG" id="COG0829">
    <property type="taxonomic scope" value="Bacteria"/>
</dbReference>
<dbReference type="HOGENOM" id="CLU_056339_4_0_3"/>
<dbReference type="OrthoDB" id="9798842at2"/>
<dbReference type="Proteomes" id="UP000001961">
    <property type="component" value="Chromosome"/>
</dbReference>
<dbReference type="GO" id="GO:0005737">
    <property type="term" value="C:cytoplasm"/>
    <property type="evidence" value="ECO:0007669"/>
    <property type="project" value="UniProtKB-SubCell"/>
</dbReference>
<dbReference type="GO" id="GO:0016151">
    <property type="term" value="F:nickel cation binding"/>
    <property type="evidence" value="ECO:0007669"/>
    <property type="project" value="UniProtKB-UniRule"/>
</dbReference>
<dbReference type="HAMAP" id="MF_01384">
    <property type="entry name" value="UreD"/>
    <property type="match status" value="1"/>
</dbReference>
<dbReference type="InterPro" id="IPR002669">
    <property type="entry name" value="UreD"/>
</dbReference>
<dbReference type="PANTHER" id="PTHR33643">
    <property type="entry name" value="UREASE ACCESSORY PROTEIN D"/>
    <property type="match status" value="1"/>
</dbReference>
<dbReference type="PANTHER" id="PTHR33643:SF1">
    <property type="entry name" value="UREASE ACCESSORY PROTEIN D"/>
    <property type="match status" value="1"/>
</dbReference>
<dbReference type="Pfam" id="PF01774">
    <property type="entry name" value="UreD"/>
    <property type="match status" value="1"/>
</dbReference>
<feature type="chain" id="PRO_0000340523" description="Urease accessory protein UreD">
    <location>
        <begin position="1"/>
        <end position="296"/>
    </location>
</feature>
<protein>
    <recommendedName>
        <fullName evidence="1">Urease accessory protein UreD</fullName>
    </recommendedName>
</protein>
<accession>Q0I659</accession>